<accession>A0ALL5</accession>
<evidence type="ECO:0000255" key="1">
    <source>
        <dbReference type="HAMAP-Rule" id="MF_01346"/>
    </source>
</evidence>
<proteinExistence type="inferred from homology"/>
<dbReference type="EC" id="7.1.2.2" evidence="1"/>
<dbReference type="EMBL" id="AM263198">
    <property type="protein sequence ID" value="CAK21897.1"/>
    <property type="molecule type" value="Genomic_DNA"/>
</dbReference>
<dbReference type="SMR" id="A0ALL5"/>
<dbReference type="STRING" id="386043.lwe2479"/>
<dbReference type="KEGG" id="lwe:lwe2479"/>
<dbReference type="eggNOG" id="COG0056">
    <property type="taxonomic scope" value="Bacteria"/>
</dbReference>
<dbReference type="HOGENOM" id="CLU_010091_2_1_9"/>
<dbReference type="OrthoDB" id="9803053at2"/>
<dbReference type="Proteomes" id="UP000000779">
    <property type="component" value="Chromosome"/>
</dbReference>
<dbReference type="GO" id="GO:0005886">
    <property type="term" value="C:plasma membrane"/>
    <property type="evidence" value="ECO:0007669"/>
    <property type="project" value="UniProtKB-SubCell"/>
</dbReference>
<dbReference type="GO" id="GO:0045259">
    <property type="term" value="C:proton-transporting ATP synthase complex"/>
    <property type="evidence" value="ECO:0007669"/>
    <property type="project" value="UniProtKB-KW"/>
</dbReference>
<dbReference type="GO" id="GO:0043531">
    <property type="term" value="F:ADP binding"/>
    <property type="evidence" value="ECO:0007669"/>
    <property type="project" value="TreeGrafter"/>
</dbReference>
<dbReference type="GO" id="GO:0005524">
    <property type="term" value="F:ATP binding"/>
    <property type="evidence" value="ECO:0007669"/>
    <property type="project" value="UniProtKB-UniRule"/>
</dbReference>
<dbReference type="GO" id="GO:0046933">
    <property type="term" value="F:proton-transporting ATP synthase activity, rotational mechanism"/>
    <property type="evidence" value="ECO:0007669"/>
    <property type="project" value="UniProtKB-UniRule"/>
</dbReference>
<dbReference type="CDD" id="cd18113">
    <property type="entry name" value="ATP-synt_F1_alpha_C"/>
    <property type="match status" value="1"/>
</dbReference>
<dbReference type="CDD" id="cd18116">
    <property type="entry name" value="ATP-synt_F1_alpha_N"/>
    <property type="match status" value="1"/>
</dbReference>
<dbReference type="CDD" id="cd01132">
    <property type="entry name" value="F1-ATPase_alpha_CD"/>
    <property type="match status" value="1"/>
</dbReference>
<dbReference type="FunFam" id="1.20.150.20:FF:000001">
    <property type="entry name" value="ATP synthase subunit alpha"/>
    <property type="match status" value="1"/>
</dbReference>
<dbReference type="FunFam" id="2.40.30.20:FF:000001">
    <property type="entry name" value="ATP synthase subunit alpha"/>
    <property type="match status" value="1"/>
</dbReference>
<dbReference type="FunFam" id="3.40.50.300:FF:000002">
    <property type="entry name" value="ATP synthase subunit alpha"/>
    <property type="match status" value="1"/>
</dbReference>
<dbReference type="Gene3D" id="2.40.30.20">
    <property type="match status" value="1"/>
</dbReference>
<dbReference type="Gene3D" id="1.20.150.20">
    <property type="entry name" value="ATP synthase alpha/beta chain, C-terminal domain"/>
    <property type="match status" value="1"/>
</dbReference>
<dbReference type="Gene3D" id="3.40.50.300">
    <property type="entry name" value="P-loop containing nucleotide triphosphate hydrolases"/>
    <property type="match status" value="1"/>
</dbReference>
<dbReference type="HAMAP" id="MF_01346">
    <property type="entry name" value="ATP_synth_alpha_bact"/>
    <property type="match status" value="1"/>
</dbReference>
<dbReference type="InterPro" id="IPR023366">
    <property type="entry name" value="ATP_synth_asu-like_sf"/>
</dbReference>
<dbReference type="InterPro" id="IPR000793">
    <property type="entry name" value="ATP_synth_asu_C"/>
</dbReference>
<dbReference type="InterPro" id="IPR038376">
    <property type="entry name" value="ATP_synth_asu_C_sf"/>
</dbReference>
<dbReference type="InterPro" id="IPR033732">
    <property type="entry name" value="ATP_synth_F1_a_nt-bd_dom"/>
</dbReference>
<dbReference type="InterPro" id="IPR005294">
    <property type="entry name" value="ATP_synth_F1_asu"/>
</dbReference>
<dbReference type="InterPro" id="IPR020003">
    <property type="entry name" value="ATPase_a/bsu_AS"/>
</dbReference>
<dbReference type="InterPro" id="IPR004100">
    <property type="entry name" value="ATPase_F1/V1/A1_a/bsu_N"/>
</dbReference>
<dbReference type="InterPro" id="IPR036121">
    <property type="entry name" value="ATPase_F1/V1/A1_a/bsu_N_sf"/>
</dbReference>
<dbReference type="InterPro" id="IPR000194">
    <property type="entry name" value="ATPase_F1/V1/A1_a/bsu_nucl-bd"/>
</dbReference>
<dbReference type="InterPro" id="IPR027417">
    <property type="entry name" value="P-loop_NTPase"/>
</dbReference>
<dbReference type="NCBIfam" id="TIGR00962">
    <property type="entry name" value="atpA"/>
    <property type="match status" value="1"/>
</dbReference>
<dbReference type="NCBIfam" id="NF009884">
    <property type="entry name" value="PRK13343.1"/>
    <property type="match status" value="1"/>
</dbReference>
<dbReference type="PANTHER" id="PTHR48082">
    <property type="entry name" value="ATP SYNTHASE SUBUNIT ALPHA, MITOCHONDRIAL"/>
    <property type="match status" value="1"/>
</dbReference>
<dbReference type="PANTHER" id="PTHR48082:SF2">
    <property type="entry name" value="ATP SYNTHASE SUBUNIT ALPHA, MITOCHONDRIAL"/>
    <property type="match status" value="1"/>
</dbReference>
<dbReference type="Pfam" id="PF00006">
    <property type="entry name" value="ATP-synt_ab"/>
    <property type="match status" value="1"/>
</dbReference>
<dbReference type="Pfam" id="PF00306">
    <property type="entry name" value="ATP-synt_ab_C"/>
    <property type="match status" value="1"/>
</dbReference>
<dbReference type="Pfam" id="PF02874">
    <property type="entry name" value="ATP-synt_ab_N"/>
    <property type="match status" value="1"/>
</dbReference>
<dbReference type="PIRSF" id="PIRSF039088">
    <property type="entry name" value="F_ATPase_subunit_alpha"/>
    <property type="match status" value="1"/>
</dbReference>
<dbReference type="SUPFAM" id="SSF47917">
    <property type="entry name" value="C-terminal domain of alpha and beta subunits of F1 ATP synthase"/>
    <property type="match status" value="1"/>
</dbReference>
<dbReference type="SUPFAM" id="SSF50615">
    <property type="entry name" value="N-terminal domain of alpha and beta subunits of F1 ATP synthase"/>
    <property type="match status" value="1"/>
</dbReference>
<dbReference type="SUPFAM" id="SSF52540">
    <property type="entry name" value="P-loop containing nucleoside triphosphate hydrolases"/>
    <property type="match status" value="1"/>
</dbReference>
<dbReference type="PROSITE" id="PS00152">
    <property type="entry name" value="ATPASE_ALPHA_BETA"/>
    <property type="match status" value="1"/>
</dbReference>
<feature type="chain" id="PRO_0000339038" description="ATP synthase subunit alpha 2">
    <location>
        <begin position="1"/>
        <end position="504"/>
    </location>
</feature>
<feature type="binding site" evidence="1">
    <location>
        <begin position="169"/>
        <end position="176"/>
    </location>
    <ligand>
        <name>ATP</name>
        <dbReference type="ChEBI" id="CHEBI:30616"/>
    </ligand>
</feature>
<feature type="site" description="Required for activity" evidence="1">
    <location>
        <position position="362"/>
    </location>
</feature>
<sequence>MSIKAEEISSIIKQQIENYHSELKVSDVGTVTYIGDGIARAHGLDNAMAGELLEFSNGVMGMAQNLETNDVGIIILGPYTEIREGDEVRRTGKIMEVPVGEALIGRVVNSLGQPVDGLGPIETTGTRPIEAVAPGVMQRQSVNEPLQTGIKAIDALVPIGRGQRELIIGDRQTGKTSVAIDTILNQADQDMICIYVAIGQKESTVRNAVETLRHHGALDYTIVVTAAASQPAPLLYLAPYAGVAMAEEFMYNGKHVLVVYDDLSKQAAAYRELSLLLRRPPGREAYPGDVFYLHSRLLERAAKLNDSLGGGSITALPFVETQAGDISAYIPTNVISITDGQIFLQSDLFFSGVRPAINAGLSVSRVGGSAQIKAMKTVAGTLRLDLAAYRELESFSQFGSDLDAATRAKLERGKRTVEVLKQDLHKPLKVEKQVLILYALVHKYLDDVPVHDVLRFESEMNTWFDHNRPELLEEIRTTKKLPDEAKLEAALKEFKNTFVPSEEK</sequence>
<protein>
    <recommendedName>
        <fullName evidence="1">ATP synthase subunit alpha 2</fullName>
        <ecNumber evidence="1">7.1.2.2</ecNumber>
    </recommendedName>
    <alternativeName>
        <fullName evidence="1">ATP synthase F1 sector subunit alpha 2</fullName>
    </alternativeName>
    <alternativeName>
        <fullName evidence="1">F-ATPase subunit alpha 2</fullName>
    </alternativeName>
</protein>
<gene>
    <name evidence="1" type="primary">atpA2</name>
    <name type="ordered locus">lwe2479</name>
</gene>
<organism>
    <name type="scientific">Listeria welshimeri serovar 6b (strain ATCC 35897 / DSM 20650 / CCUG 15529 / CIP 8149 / NCTC 11857 / SLCC 5334 / V8)</name>
    <dbReference type="NCBI Taxonomy" id="386043"/>
    <lineage>
        <taxon>Bacteria</taxon>
        <taxon>Bacillati</taxon>
        <taxon>Bacillota</taxon>
        <taxon>Bacilli</taxon>
        <taxon>Bacillales</taxon>
        <taxon>Listeriaceae</taxon>
        <taxon>Listeria</taxon>
    </lineage>
</organism>
<name>ATPA2_LISW6</name>
<reference key="1">
    <citation type="journal article" date="2006" name="J. Bacteriol.">
        <title>Whole-genome sequence of Listeria welshimeri reveals common steps in genome reduction with Listeria innocua as compared to Listeria monocytogenes.</title>
        <authorList>
            <person name="Hain T."/>
            <person name="Steinweg C."/>
            <person name="Kuenne C.T."/>
            <person name="Billion A."/>
            <person name="Ghai R."/>
            <person name="Chatterjee S.S."/>
            <person name="Domann E."/>
            <person name="Kaerst U."/>
            <person name="Goesmann A."/>
            <person name="Bekel T."/>
            <person name="Bartels D."/>
            <person name="Kaiser O."/>
            <person name="Meyer F."/>
            <person name="Puehler A."/>
            <person name="Weisshaar B."/>
            <person name="Wehland J."/>
            <person name="Liang C."/>
            <person name="Dandekar T."/>
            <person name="Lampidis R."/>
            <person name="Kreft J."/>
            <person name="Goebel W."/>
            <person name="Chakraborty T."/>
        </authorList>
    </citation>
    <scope>NUCLEOTIDE SEQUENCE [LARGE SCALE GENOMIC DNA]</scope>
    <source>
        <strain>ATCC 35897 / DSM 20650 / CCUG 15529 / CIP 8149 / NCTC 11857 / SLCC 5334 / V8</strain>
    </source>
</reference>
<keyword id="KW-0066">ATP synthesis</keyword>
<keyword id="KW-0067">ATP-binding</keyword>
<keyword id="KW-1003">Cell membrane</keyword>
<keyword id="KW-0139">CF(1)</keyword>
<keyword id="KW-0375">Hydrogen ion transport</keyword>
<keyword id="KW-0406">Ion transport</keyword>
<keyword id="KW-0472">Membrane</keyword>
<keyword id="KW-0547">Nucleotide-binding</keyword>
<keyword id="KW-1278">Translocase</keyword>
<keyword id="KW-0813">Transport</keyword>
<comment type="function">
    <text evidence="1">Produces ATP from ADP in the presence of a proton gradient across the membrane. The alpha chain is a regulatory subunit.</text>
</comment>
<comment type="catalytic activity">
    <reaction evidence="1">
        <text>ATP + H2O + 4 H(+)(in) = ADP + phosphate + 5 H(+)(out)</text>
        <dbReference type="Rhea" id="RHEA:57720"/>
        <dbReference type="ChEBI" id="CHEBI:15377"/>
        <dbReference type="ChEBI" id="CHEBI:15378"/>
        <dbReference type="ChEBI" id="CHEBI:30616"/>
        <dbReference type="ChEBI" id="CHEBI:43474"/>
        <dbReference type="ChEBI" id="CHEBI:456216"/>
        <dbReference type="EC" id="7.1.2.2"/>
    </reaction>
</comment>
<comment type="subunit">
    <text evidence="1">F-type ATPases have 2 components, CF(1) - the catalytic core - and CF(0) - the membrane proton channel. CF(1) has five subunits: alpha(3), beta(3), gamma(1), delta(1), epsilon(1). CF(0) has three main subunits: a(1), b(2) and c(9-12). The alpha and beta chains form an alternating ring which encloses part of the gamma chain. CF(1) is attached to CF(0) by a central stalk formed by the gamma and epsilon chains, while a peripheral stalk is formed by the delta and b chains.</text>
</comment>
<comment type="subcellular location">
    <subcellularLocation>
        <location evidence="1">Cell membrane</location>
        <topology evidence="1">Peripheral membrane protein</topology>
    </subcellularLocation>
</comment>
<comment type="similarity">
    <text evidence="1">Belongs to the ATPase alpha/beta chains family.</text>
</comment>